<accession>Q3JRQ3</accession>
<organism>
    <name type="scientific">Burkholderia pseudomallei (strain 1710b)</name>
    <dbReference type="NCBI Taxonomy" id="320372"/>
    <lineage>
        <taxon>Bacteria</taxon>
        <taxon>Pseudomonadati</taxon>
        <taxon>Pseudomonadota</taxon>
        <taxon>Betaproteobacteria</taxon>
        <taxon>Burkholderiales</taxon>
        <taxon>Burkholderiaceae</taxon>
        <taxon>Burkholderia</taxon>
        <taxon>pseudomallei group</taxon>
    </lineage>
</organism>
<gene>
    <name evidence="1" type="primary">ispG</name>
    <name type="ordered locus">BURPS1710b_2355</name>
</gene>
<keyword id="KW-0004">4Fe-4S</keyword>
<keyword id="KW-0408">Iron</keyword>
<keyword id="KW-0411">Iron-sulfur</keyword>
<keyword id="KW-0414">Isoprene biosynthesis</keyword>
<keyword id="KW-0479">Metal-binding</keyword>
<keyword id="KW-0560">Oxidoreductase</keyword>
<name>ISPG_BURP1</name>
<proteinExistence type="inferred from homology"/>
<dbReference type="EC" id="1.17.7.3" evidence="1"/>
<dbReference type="EMBL" id="CP000124">
    <property type="protein sequence ID" value="ABA48559.1"/>
    <property type="molecule type" value="Genomic_DNA"/>
</dbReference>
<dbReference type="RefSeq" id="WP_004527159.1">
    <property type="nucleotide sequence ID" value="NC_007434.1"/>
</dbReference>
<dbReference type="SMR" id="Q3JRQ3"/>
<dbReference type="EnsemblBacteria" id="ABA48559">
    <property type="protein sequence ID" value="ABA48559"/>
    <property type="gene ID" value="BURPS1710b_2355"/>
</dbReference>
<dbReference type="GeneID" id="92979078"/>
<dbReference type="KEGG" id="bpm:BURPS1710b_2355"/>
<dbReference type="HOGENOM" id="CLU_042258_1_0_4"/>
<dbReference type="UniPathway" id="UPA00056">
    <property type="reaction ID" value="UER00096"/>
</dbReference>
<dbReference type="Proteomes" id="UP000002700">
    <property type="component" value="Chromosome I"/>
</dbReference>
<dbReference type="GO" id="GO:0051539">
    <property type="term" value="F:4 iron, 4 sulfur cluster binding"/>
    <property type="evidence" value="ECO:0007669"/>
    <property type="project" value="UniProtKB-UniRule"/>
</dbReference>
<dbReference type="GO" id="GO:0046429">
    <property type="term" value="F:4-hydroxy-3-methylbut-2-en-1-yl diphosphate synthase activity (ferredoxin)"/>
    <property type="evidence" value="ECO:0007669"/>
    <property type="project" value="UniProtKB-UniRule"/>
</dbReference>
<dbReference type="GO" id="GO:0141197">
    <property type="term" value="F:4-hydroxy-3-methylbut-2-enyl-diphosphate synthase activity (flavodoxin)"/>
    <property type="evidence" value="ECO:0007669"/>
    <property type="project" value="UniProtKB-EC"/>
</dbReference>
<dbReference type="GO" id="GO:0005506">
    <property type="term" value="F:iron ion binding"/>
    <property type="evidence" value="ECO:0007669"/>
    <property type="project" value="InterPro"/>
</dbReference>
<dbReference type="GO" id="GO:0019288">
    <property type="term" value="P:isopentenyl diphosphate biosynthetic process, methylerythritol 4-phosphate pathway"/>
    <property type="evidence" value="ECO:0007669"/>
    <property type="project" value="UniProtKB-UniRule"/>
</dbReference>
<dbReference type="GO" id="GO:0016114">
    <property type="term" value="P:terpenoid biosynthetic process"/>
    <property type="evidence" value="ECO:0007669"/>
    <property type="project" value="InterPro"/>
</dbReference>
<dbReference type="FunFam" id="3.30.413.10:FF:000012">
    <property type="entry name" value="4-hydroxy-3-methylbut-2-en-1-yl diphosphate synthase (flavodoxin)"/>
    <property type="match status" value="1"/>
</dbReference>
<dbReference type="Gene3D" id="3.20.20.20">
    <property type="entry name" value="Dihydropteroate synthase-like"/>
    <property type="match status" value="1"/>
</dbReference>
<dbReference type="Gene3D" id="3.30.413.10">
    <property type="entry name" value="Sulfite Reductase Hemoprotein, domain 1"/>
    <property type="match status" value="1"/>
</dbReference>
<dbReference type="HAMAP" id="MF_00159">
    <property type="entry name" value="IspG"/>
    <property type="match status" value="1"/>
</dbReference>
<dbReference type="InterPro" id="IPR011005">
    <property type="entry name" value="Dihydropteroate_synth-like_sf"/>
</dbReference>
<dbReference type="InterPro" id="IPR016425">
    <property type="entry name" value="IspG_bac"/>
</dbReference>
<dbReference type="InterPro" id="IPR004588">
    <property type="entry name" value="IspG_bac-typ"/>
</dbReference>
<dbReference type="InterPro" id="IPR045854">
    <property type="entry name" value="NO2/SO3_Rdtase_4Fe4S_sf"/>
</dbReference>
<dbReference type="NCBIfam" id="TIGR00612">
    <property type="entry name" value="ispG_gcpE"/>
    <property type="match status" value="1"/>
</dbReference>
<dbReference type="NCBIfam" id="NF001540">
    <property type="entry name" value="PRK00366.1"/>
    <property type="match status" value="1"/>
</dbReference>
<dbReference type="PANTHER" id="PTHR30454">
    <property type="entry name" value="4-HYDROXY-3-METHYLBUT-2-EN-1-YL DIPHOSPHATE SYNTHASE"/>
    <property type="match status" value="1"/>
</dbReference>
<dbReference type="PANTHER" id="PTHR30454:SF0">
    <property type="entry name" value="4-HYDROXY-3-METHYLBUT-2-EN-1-YL DIPHOSPHATE SYNTHASE (FERREDOXIN), CHLOROPLASTIC"/>
    <property type="match status" value="1"/>
</dbReference>
<dbReference type="Pfam" id="PF04551">
    <property type="entry name" value="GcpE"/>
    <property type="match status" value="1"/>
</dbReference>
<dbReference type="PIRSF" id="PIRSF004640">
    <property type="entry name" value="IspG"/>
    <property type="match status" value="1"/>
</dbReference>
<comment type="function">
    <text evidence="1">Converts 2C-methyl-D-erythritol 2,4-cyclodiphosphate (ME-2,4cPP) into 1-hydroxy-2-methyl-2-(E)-butenyl 4-diphosphate.</text>
</comment>
<comment type="catalytic activity">
    <reaction evidence="1">
        <text>(2E)-4-hydroxy-3-methylbut-2-enyl diphosphate + oxidized [flavodoxin] + H2O + 2 H(+) = 2-C-methyl-D-erythritol 2,4-cyclic diphosphate + reduced [flavodoxin]</text>
        <dbReference type="Rhea" id="RHEA:43604"/>
        <dbReference type="Rhea" id="RHEA-COMP:10622"/>
        <dbReference type="Rhea" id="RHEA-COMP:10623"/>
        <dbReference type="ChEBI" id="CHEBI:15377"/>
        <dbReference type="ChEBI" id="CHEBI:15378"/>
        <dbReference type="ChEBI" id="CHEBI:57618"/>
        <dbReference type="ChEBI" id="CHEBI:58210"/>
        <dbReference type="ChEBI" id="CHEBI:58483"/>
        <dbReference type="ChEBI" id="CHEBI:128753"/>
        <dbReference type="EC" id="1.17.7.3"/>
    </reaction>
</comment>
<comment type="cofactor">
    <cofactor evidence="1">
        <name>[4Fe-4S] cluster</name>
        <dbReference type="ChEBI" id="CHEBI:49883"/>
    </cofactor>
    <text evidence="1">Binds 1 [4Fe-4S] cluster.</text>
</comment>
<comment type="pathway">
    <text evidence="1">Isoprenoid biosynthesis; isopentenyl diphosphate biosynthesis via DXP pathway; isopentenyl diphosphate from 1-deoxy-D-xylulose 5-phosphate: step 5/6.</text>
</comment>
<comment type="similarity">
    <text evidence="1">Belongs to the IspG family.</text>
</comment>
<protein>
    <recommendedName>
        <fullName evidence="1">4-hydroxy-3-methylbut-2-en-1-yl diphosphate synthase (flavodoxin)</fullName>
        <ecNumber evidence="1">1.17.7.3</ecNumber>
    </recommendedName>
    <alternativeName>
        <fullName evidence="1">1-hydroxy-2-methyl-2-(E)-butenyl 4-diphosphate synthase</fullName>
    </alternativeName>
</protein>
<evidence type="ECO:0000255" key="1">
    <source>
        <dbReference type="HAMAP-Rule" id="MF_00159"/>
    </source>
</evidence>
<evidence type="ECO:0000256" key="2">
    <source>
        <dbReference type="SAM" id="MobiDB-lite"/>
    </source>
</evidence>
<feature type="chain" id="PRO_1000011450" description="4-hydroxy-3-methylbut-2-en-1-yl diphosphate synthase (flavodoxin)">
    <location>
        <begin position="1"/>
        <end position="434"/>
    </location>
</feature>
<feature type="region of interest" description="Disordered" evidence="2">
    <location>
        <begin position="1"/>
        <end position="20"/>
    </location>
</feature>
<feature type="compositionally biased region" description="Polar residues" evidence="2">
    <location>
        <begin position="1"/>
        <end position="15"/>
    </location>
</feature>
<feature type="binding site" evidence="1">
    <location>
        <position position="322"/>
    </location>
    <ligand>
        <name>[4Fe-4S] cluster</name>
        <dbReference type="ChEBI" id="CHEBI:49883"/>
    </ligand>
</feature>
<feature type="binding site" evidence="1">
    <location>
        <position position="325"/>
    </location>
    <ligand>
        <name>[4Fe-4S] cluster</name>
        <dbReference type="ChEBI" id="CHEBI:49883"/>
    </ligand>
</feature>
<feature type="binding site" evidence="1">
    <location>
        <position position="368"/>
    </location>
    <ligand>
        <name>[4Fe-4S] cluster</name>
        <dbReference type="ChEBI" id="CHEBI:49883"/>
    </ligand>
</feature>
<feature type="binding site" evidence="1">
    <location>
        <position position="375"/>
    </location>
    <ligand>
        <name>[4Fe-4S] cluster</name>
        <dbReference type="ChEBI" id="CHEBI:49883"/>
    </ligand>
</feature>
<reference key="1">
    <citation type="journal article" date="2010" name="Genome Biol. Evol.">
        <title>Continuing evolution of Burkholderia mallei through genome reduction and large-scale rearrangements.</title>
        <authorList>
            <person name="Losada L."/>
            <person name="Ronning C.M."/>
            <person name="DeShazer D."/>
            <person name="Woods D."/>
            <person name="Fedorova N."/>
            <person name="Kim H.S."/>
            <person name="Shabalina S.A."/>
            <person name="Pearson T.R."/>
            <person name="Brinkac L."/>
            <person name="Tan P."/>
            <person name="Nandi T."/>
            <person name="Crabtree J."/>
            <person name="Badger J."/>
            <person name="Beckstrom-Sternberg S."/>
            <person name="Saqib M."/>
            <person name="Schutzer S.E."/>
            <person name="Keim P."/>
            <person name="Nierman W.C."/>
        </authorList>
    </citation>
    <scope>NUCLEOTIDE SEQUENCE [LARGE SCALE GENOMIC DNA]</scope>
    <source>
        <strain>1710b</strain>
    </source>
</reference>
<sequence>MQSEAQSPRSSQICSTEPVFGGHAPRRVSHAVDVRWGGTLVTIGGAAPVRVQSMTNTDTADAIGTAIQVKELANAGSELVRITVNTPEAAAAVPAIREQLDRMGVTVPLVGDFHYNGHLLLRDYPDCAQALSKYRINPGNVGQGAKRDSQFAQMIEAAIKYDKPVRIGVNWGSLDQDLLARMMDENGARAEPWEAQSVMYEALIQSAIGSAERAVELGLGRDKIVLSCKVSGVQDLVAVYRELSRRCGFALHLGLTEAGMGSKGIVASTAAIGLLLQEGIGDTIRISLTPEPGAPRTGEVVVGQEILQTMGLRSFAPMVVACPGCGRTTSTLFQELALRIQTYLREQMPVWRSEYPGVEKMNVAVMGCIVNGPGESKHANIGISLPGSGENPAAPVFVDGEKVKTLRGEHIAEEFQQIVSDYVARTYGRAAAQN</sequence>